<name>HISZ_STAAM</name>
<reference key="1">
    <citation type="journal article" date="2001" name="Lancet">
        <title>Whole genome sequencing of meticillin-resistant Staphylococcus aureus.</title>
        <authorList>
            <person name="Kuroda M."/>
            <person name="Ohta T."/>
            <person name="Uchiyama I."/>
            <person name="Baba T."/>
            <person name="Yuzawa H."/>
            <person name="Kobayashi I."/>
            <person name="Cui L."/>
            <person name="Oguchi A."/>
            <person name="Aoki K."/>
            <person name="Nagai Y."/>
            <person name="Lian J.-Q."/>
            <person name="Ito T."/>
            <person name="Kanamori M."/>
            <person name="Matsumaru H."/>
            <person name="Maruyama A."/>
            <person name="Murakami H."/>
            <person name="Hosoyama A."/>
            <person name="Mizutani-Ui Y."/>
            <person name="Takahashi N.K."/>
            <person name="Sawano T."/>
            <person name="Inoue R."/>
            <person name="Kaito C."/>
            <person name="Sekimizu K."/>
            <person name="Hirakawa H."/>
            <person name="Kuhara S."/>
            <person name="Goto S."/>
            <person name="Yabuzaki J."/>
            <person name="Kanehisa M."/>
            <person name="Yamashita A."/>
            <person name="Oshima K."/>
            <person name="Furuya K."/>
            <person name="Yoshino C."/>
            <person name="Shiba T."/>
            <person name="Hattori M."/>
            <person name="Ogasawara N."/>
            <person name="Hayashi H."/>
            <person name="Hiramatsu K."/>
        </authorList>
    </citation>
    <scope>NUCLEOTIDE SEQUENCE [LARGE SCALE GENOMIC DNA]</scope>
    <source>
        <strain>Mu50 / ATCC 700699</strain>
    </source>
</reference>
<keyword id="KW-0028">Amino-acid biosynthesis</keyword>
<keyword id="KW-0963">Cytoplasm</keyword>
<keyword id="KW-0368">Histidine biosynthesis</keyword>
<evidence type="ECO:0000250" key="1"/>
<evidence type="ECO:0000305" key="2"/>
<dbReference type="EMBL" id="BA000017">
    <property type="protein sequence ID" value="BAB58842.1"/>
    <property type="molecule type" value="Genomic_DNA"/>
</dbReference>
<dbReference type="RefSeq" id="WP_001065591.1">
    <property type="nucleotide sequence ID" value="NC_002758.2"/>
</dbReference>
<dbReference type="SMR" id="P64379"/>
<dbReference type="KEGG" id="sav:SAV2680"/>
<dbReference type="HOGENOM" id="CLU_089652_0_0_9"/>
<dbReference type="UniPathway" id="UPA00031">
    <property type="reaction ID" value="UER00006"/>
</dbReference>
<dbReference type="Proteomes" id="UP000002481">
    <property type="component" value="Chromosome"/>
</dbReference>
<dbReference type="GO" id="GO:0005737">
    <property type="term" value="C:cytoplasm"/>
    <property type="evidence" value="ECO:0007669"/>
    <property type="project" value="UniProtKB-SubCell"/>
</dbReference>
<dbReference type="GO" id="GO:0140096">
    <property type="term" value="F:catalytic activity, acting on a protein"/>
    <property type="evidence" value="ECO:0007669"/>
    <property type="project" value="UniProtKB-ARBA"/>
</dbReference>
<dbReference type="GO" id="GO:0016740">
    <property type="term" value="F:transferase activity"/>
    <property type="evidence" value="ECO:0007669"/>
    <property type="project" value="UniProtKB-ARBA"/>
</dbReference>
<dbReference type="GO" id="GO:0000105">
    <property type="term" value="P:L-histidine biosynthetic process"/>
    <property type="evidence" value="ECO:0007669"/>
    <property type="project" value="UniProtKB-UniRule"/>
</dbReference>
<dbReference type="Gene3D" id="3.30.930.10">
    <property type="entry name" value="Bira Bifunctional Protein, Domain 2"/>
    <property type="match status" value="1"/>
</dbReference>
<dbReference type="HAMAP" id="MF_00125">
    <property type="entry name" value="HisZ"/>
    <property type="match status" value="1"/>
</dbReference>
<dbReference type="InterPro" id="IPR045864">
    <property type="entry name" value="aa-tRNA-synth_II/BPL/LPL"/>
</dbReference>
<dbReference type="InterPro" id="IPR041715">
    <property type="entry name" value="HisRS-like_core"/>
</dbReference>
<dbReference type="InterPro" id="IPR004517">
    <property type="entry name" value="HisZ"/>
</dbReference>
<dbReference type="NCBIfam" id="NF008947">
    <property type="entry name" value="PRK12294.1"/>
    <property type="match status" value="1"/>
</dbReference>
<dbReference type="Pfam" id="PF13393">
    <property type="entry name" value="tRNA-synt_His"/>
    <property type="match status" value="1"/>
</dbReference>
<dbReference type="SUPFAM" id="SSF55681">
    <property type="entry name" value="Class II aaRS and biotin synthetases"/>
    <property type="match status" value="1"/>
</dbReference>
<feature type="chain" id="PRO_0000171060" description="ATP phosphoribosyltransferase regulatory subunit">
    <location>
        <begin position="1"/>
        <end position="272"/>
    </location>
</feature>
<organism>
    <name type="scientific">Staphylococcus aureus (strain Mu50 / ATCC 700699)</name>
    <dbReference type="NCBI Taxonomy" id="158878"/>
    <lineage>
        <taxon>Bacteria</taxon>
        <taxon>Bacillati</taxon>
        <taxon>Bacillota</taxon>
        <taxon>Bacilli</taxon>
        <taxon>Bacillales</taxon>
        <taxon>Staphylococcaceae</taxon>
        <taxon>Staphylococcus</taxon>
    </lineage>
</organism>
<comment type="function">
    <text evidence="1">Required for the first step of histidine biosynthesis. May allow the feedback regulation of ATP phosphoribosyltransferase activity by histidine (By similarity).</text>
</comment>
<comment type="pathway">
    <text>Amino-acid biosynthesis; L-histidine biosynthesis; L-histidine from 5-phospho-alpha-D-ribose 1-diphosphate: step 1/9.</text>
</comment>
<comment type="subunit">
    <text evidence="1">Heteromultimer composed of HisG and HisZ subunits.</text>
</comment>
<comment type="subcellular location">
    <subcellularLocation>
        <location evidence="1">Cytoplasm</location>
    </subcellularLocation>
</comment>
<comment type="miscellaneous">
    <text>This function is generally fulfilled by the C-terminal part of HisG, which is missing in some bacteria such as this one.</text>
</comment>
<comment type="similarity">
    <text evidence="2">Belongs to the class-II aminoacyl-tRNA synthetase family. HisZ subfamily.</text>
</comment>
<gene>
    <name type="primary">hisZ</name>
    <name type="ordered locus">SAV2680</name>
</gene>
<protein>
    <recommendedName>
        <fullName>ATP phosphoribosyltransferase regulatory subunit</fullName>
    </recommendedName>
</protein>
<proteinExistence type="inferred from homology"/>
<accession>P64379</accession>
<accession>Q99QW1</accession>
<sequence>MNNSEQLIALKESETAFLKYFNKADYELVDFSVVEKLDWKQLNHEDLQQMGERNFWQHEHQIYALRNDFTDQLLRYYSMYPTAATKVAYTGLIIRNNEAAVQVGLENYAPSLANVQQSLKLFIQFIQQQLRDNVHFVVLGHYQLLDALLDKSLQTPDILSMIEERNLSGLVTYLSTEHPIVQILKENTQQQLNVLEHYIPNDHPALVELKIWERWLHTQGYKDIHLDITAQPPRSYYTGLFIQCHFAENESRVLTGGYYKGSIEGFGLGLTL</sequence>